<dbReference type="EC" id="6.1.1.15" evidence="1"/>
<dbReference type="EMBL" id="CP000903">
    <property type="protein sequence ID" value="ABY44813.1"/>
    <property type="molecule type" value="Genomic_DNA"/>
</dbReference>
<dbReference type="RefSeq" id="WP_002142912.1">
    <property type="nucleotide sequence ID" value="NC_010184.1"/>
</dbReference>
<dbReference type="SMR" id="A9VT57"/>
<dbReference type="KEGG" id="bwe:BcerKBAB4_3642"/>
<dbReference type="eggNOG" id="COG0442">
    <property type="taxonomic scope" value="Bacteria"/>
</dbReference>
<dbReference type="HOGENOM" id="CLU_016739_0_0_9"/>
<dbReference type="Proteomes" id="UP000002154">
    <property type="component" value="Chromosome"/>
</dbReference>
<dbReference type="GO" id="GO:0005829">
    <property type="term" value="C:cytosol"/>
    <property type="evidence" value="ECO:0007669"/>
    <property type="project" value="TreeGrafter"/>
</dbReference>
<dbReference type="GO" id="GO:0002161">
    <property type="term" value="F:aminoacyl-tRNA deacylase activity"/>
    <property type="evidence" value="ECO:0007669"/>
    <property type="project" value="InterPro"/>
</dbReference>
<dbReference type="GO" id="GO:0005524">
    <property type="term" value="F:ATP binding"/>
    <property type="evidence" value="ECO:0007669"/>
    <property type="project" value="UniProtKB-UniRule"/>
</dbReference>
<dbReference type="GO" id="GO:0140096">
    <property type="term" value="F:catalytic activity, acting on a protein"/>
    <property type="evidence" value="ECO:0007669"/>
    <property type="project" value="UniProtKB-ARBA"/>
</dbReference>
<dbReference type="GO" id="GO:0004827">
    <property type="term" value="F:proline-tRNA ligase activity"/>
    <property type="evidence" value="ECO:0007669"/>
    <property type="project" value="UniProtKB-UniRule"/>
</dbReference>
<dbReference type="GO" id="GO:0016740">
    <property type="term" value="F:transferase activity"/>
    <property type="evidence" value="ECO:0007669"/>
    <property type="project" value="UniProtKB-ARBA"/>
</dbReference>
<dbReference type="GO" id="GO:0006433">
    <property type="term" value="P:prolyl-tRNA aminoacylation"/>
    <property type="evidence" value="ECO:0007669"/>
    <property type="project" value="UniProtKB-UniRule"/>
</dbReference>
<dbReference type="CDD" id="cd04334">
    <property type="entry name" value="ProRS-INS"/>
    <property type="match status" value="1"/>
</dbReference>
<dbReference type="CDD" id="cd00861">
    <property type="entry name" value="ProRS_anticodon_short"/>
    <property type="match status" value="1"/>
</dbReference>
<dbReference type="CDD" id="cd00779">
    <property type="entry name" value="ProRS_core_prok"/>
    <property type="match status" value="1"/>
</dbReference>
<dbReference type="FunFam" id="3.30.930.10:FF:000043">
    <property type="entry name" value="Proline--tRNA ligase"/>
    <property type="match status" value="1"/>
</dbReference>
<dbReference type="FunFam" id="3.30.930.10:FF:000065">
    <property type="entry name" value="Proline--tRNA ligase"/>
    <property type="match status" value="1"/>
</dbReference>
<dbReference type="FunFam" id="3.40.50.800:FF:000011">
    <property type="entry name" value="Proline--tRNA ligase"/>
    <property type="match status" value="1"/>
</dbReference>
<dbReference type="Gene3D" id="3.40.50.800">
    <property type="entry name" value="Anticodon-binding domain"/>
    <property type="match status" value="1"/>
</dbReference>
<dbReference type="Gene3D" id="3.30.930.10">
    <property type="entry name" value="Bira Bifunctional Protein, Domain 2"/>
    <property type="match status" value="2"/>
</dbReference>
<dbReference type="HAMAP" id="MF_01569">
    <property type="entry name" value="Pro_tRNA_synth_type1"/>
    <property type="match status" value="1"/>
</dbReference>
<dbReference type="InterPro" id="IPR002314">
    <property type="entry name" value="aa-tRNA-synt_IIb"/>
</dbReference>
<dbReference type="InterPro" id="IPR006195">
    <property type="entry name" value="aa-tRNA-synth_II"/>
</dbReference>
<dbReference type="InterPro" id="IPR045864">
    <property type="entry name" value="aa-tRNA-synth_II/BPL/LPL"/>
</dbReference>
<dbReference type="InterPro" id="IPR004154">
    <property type="entry name" value="Anticodon-bd"/>
</dbReference>
<dbReference type="InterPro" id="IPR036621">
    <property type="entry name" value="Anticodon-bd_dom_sf"/>
</dbReference>
<dbReference type="InterPro" id="IPR002316">
    <property type="entry name" value="Pro-tRNA-ligase_IIa"/>
</dbReference>
<dbReference type="InterPro" id="IPR004500">
    <property type="entry name" value="Pro-tRNA-synth_IIa_bac-type"/>
</dbReference>
<dbReference type="InterPro" id="IPR023717">
    <property type="entry name" value="Pro-tRNA-Synthase_IIa_type1"/>
</dbReference>
<dbReference type="InterPro" id="IPR050062">
    <property type="entry name" value="Pro-tRNA_synthetase"/>
</dbReference>
<dbReference type="InterPro" id="IPR044140">
    <property type="entry name" value="ProRS_anticodon_short"/>
</dbReference>
<dbReference type="InterPro" id="IPR033730">
    <property type="entry name" value="ProRS_core_prok"/>
</dbReference>
<dbReference type="InterPro" id="IPR036754">
    <property type="entry name" value="YbaK/aa-tRNA-synt-asso_dom_sf"/>
</dbReference>
<dbReference type="InterPro" id="IPR007214">
    <property type="entry name" value="YbaK/aa-tRNA-synth-assoc-dom"/>
</dbReference>
<dbReference type="NCBIfam" id="NF006625">
    <property type="entry name" value="PRK09194.1"/>
    <property type="match status" value="1"/>
</dbReference>
<dbReference type="NCBIfam" id="TIGR00409">
    <property type="entry name" value="proS_fam_II"/>
    <property type="match status" value="1"/>
</dbReference>
<dbReference type="PANTHER" id="PTHR42753">
    <property type="entry name" value="MITOCHONDRIAL RIBOSOME PROTEIN L39/PROLYL-TRNA LIGASE FAMILY MEMBER"/>
    <property type="match status" value="1"/>
</dbReference>
<dbReference type="PANTHER" id="PTHR42753:SF2">
    <property type="entry name" value="PROLINE--TRNA LIGASE"/>
    <property type="match status" value="1"/>
</dbReference>
<dbReference type="Pfam" id="PF03129">
    <property type="entry name" value="HGTP_anticodon"/>
    <property type="match status" value="1"/>
</dbReference>
<dbReference type="Pfam" id="PF00587">
    <property type="entry name" value="tRNA-synt_2b"/>
    <property type="match status" value="1"/>
</dbReference>
<dbReference type="Pfam" id="PF04073">
    <property type="entry name" value="tRNA_edit"/>
    <property type="match status" value="1"/>
</dbReference>
<dbReference type="PIRSF" id="PIRSF001535">
    <property type="entry name" value="ProRS_1"/>
    <property type="match status" value="1"/>
</dbReference>
<dbReference type="PRINTS" id="PR01046">
    <property type="entry name" value="TRNASYNTHPRO"/>
</dbReference>
<dbReference type="SUPFAM" id="SSF52954">
    <property type="entry name" value="Class II aaRS ABD-related"/>
    <property type="match status" value="1"/>
</dbReference>
<dbReference type="SUPFAM" id="SSF55681">
    <property type="entry name" value="Class II aaRS and biotin synthetases"/>
    <property type="match status" value="1"/>
</dbReference>
<dbReference type="SUPFAM" id="SSF55826">
    <property type="entry name" value="YbaK/ProRS associated domain"/>
    <property type="match status" value="1"/>
</dbReference>
<dbReference type="PROSITE" id="PS50862">
    <property type="entry name" value="AA_TRNA_LIGASE_II"/>
    <property type="match status" value="1"/>
</dbReference>
<protein>
    <recommendedName>
        <fullName evidence="1">Proline--tRNA ligase</fullName>
        <ecNumber evidence="1">6.1.1.15</ecNumber>
    </recommendedName>
    <alternativeName>
        <fullName evidence="1">Prolyl-tRNA synthetase</fullName>
        <shortName evidence="1">ProRS</shortName>
    </alternativeName>
</protein>
<organism>
    <name type="scientific">Bacillus mycoides (strain KBAB4)</name>
    <name type="common">Bacillus weihenstephanensis</name>
    <dbReference type="NCBI Taxonomy" id="315730"/>
    <lineage>
        <taxon>Bacteria</taxon>
        <taxon>Bacillati</taxon>
        <taxon>Bacillota</taxon>
        <taxon>Bacilli</taxon>
        <taxon>Bacillales</taxon>
        <taxon>Bacillaceae</taxon>
        <taxon>Bacillus</taxon>
        <taxon>Bacillus cereus group</taxon>
    </lineage>
</organism>
<accession>A9VT57</accession>
<name>SYP_BACMK</name>
<proteinExistence type="inferred from homology"/>
<comment type="function">
    <text evidence="1">Catalyzes the attachment of proline to tRNA(Pro) in a two-step reaction: proline is first activated by ATP to form Pro-AMP and then transferred to the acceptor end of tRNA(Pro). As ProRS can inadvertently accommodate and process non-cognate amino acids such as alanine and cysteine, to avoid such errors it has two additional distinct editing activities against alanine. One activity is designated as 'pretransfer' editing and involves the tRNA(Pro)-independent hydrolysis of activated Ala-AMP. The other activity is designated 'posttransfer' editing and involves deacylation of mischarged Ala-tRNA(Pro). The misacylated Cys-tRNA(Pro) is not edited by ProRS.</text>
</comment>
<comment type="catalytic activity">
    <reaction evidence="1">
        <text>tRNA(Pro) + L-proline + ATP = L-prolyl-tRNA(Pro) + AMP + diphosphate</text>
        <dbReference type="Rhea" id="RHEA:14305"/>
        <dbReference type="Rhea" id="RHEA-COMP:9700"/>
        <dbReference type="Rhea" id="RHEA-COMP:9702"/>
        <dbReference type="ChEBI" id="CHEBI:30616"/>
        <dbReference type="ChEBI" id="CHEBI:33019"/>
        <dbReference type="ChEBI" id="CHEBI:60039"/>
        <dbReference type="ChEBI" id="CHEBI:78442"/>
        <dbReference type="ChEBI" id="CHEBI:78532"/>
        <dbReference type="ChEBI" id="CHEBI:456215"/>
        <dbReference type="EC" id="6.1.1.15"/>
    </reaction>
</comment>
<comment type="subunit">
    <text evidence="1">Homodimer.</text>
</comment>
<comment type="subcellular location">
    <subcellularLocation>
        <location evidence="1">Cytoplasm</location>
    </subcellularLocation>
</comment>
<comment type="domain">
    <text evidence="1">Consists of three domains: the N-terminal catalytic domain, the editing domain and the C-terminal anticodon-binding domain.</text>
</comment>
<comment type="similarity">
    <text evidence="1">Belongs to the class-II aminoacyl-tRNA synthetase family. ProS type 1 subfamily.</text>
</comment>
<reference key="1">
    <citation type="journal article" date="2008" name="Chem. Biol. Interact.">
        <title>Extending the Bacillus cereus group genomics to putative food-borne pathogens of different toxicity.</title>
        <authorList>
            <person name="Lapidus A."/>
            <person name="Goltsman E."/>
            <person name="Auger S."/>
            <person name="Galleron N."/>
            <person name="Segurens B."/>
            <person name="Dossat C."/>
            <person name="Land M.L."/>
            <person name="Broussolle V."/>
            <person name="Brillard J."/>
            <person name="Guinebretiere M.-H."/>
            <person name="Sanchis V."/>
            <person name="Nguen-the C."/>
            <person name="Lereclus D."/>
            <person name="Richardson P."/>
            <person name="Wincker P."/>
            <person name="Weissenbach J."/>
            <person name="Ehrlich S.D."/>
            <person name="Sorokin A."/>
        </authorList>
    </citation>
    <scope>NUCLEOTIDE SEQUENCE [LARGE SCALE GENOMIC DNA]</scope>
    <source>
        <strain>KBAB4</strain>
    </source>
</reference>
<sequence>MKQSMVFSPTLREVPADAEIKSHQLLLRAGFMRQNASGIYSFLPFGLKVLHKVERIVREEMERAGAVELLMPAMQASELWQESGRWYSYGSELMRMKDRNAREFALGATHEEVITDLVRDEIKSYKKLPLTLYQIQTKFRDEQRPRFGLLRGREFLMKDAYSFHATQESLDEVYSGLYKAYSNIFARCGLNFRAVIADSGAMGGKDTHEFMVLSDVGEDTIAYSDTSDYAANIEMAPVVATYTKSDEAEKALEKVATPDQKAIEEVSAFLNIAAEKCIKSMVFKVDAKLVVVLVRGDHEVNDVKVKNVYGASVVELASHEEIKELLNCEVGSLGPIGVTGDIEIIADHAVASIVNGCSGANEEGFHYVNVNPERDFKVSQYTDLRFIQEGDQSPDGNGTILFARGIEVGHVFKLGTRYSEAMNATFLDENGKTKPLIMGCYGIGVSRTVAAIAEQFNDENGLVWPKSVAPFHVHVIPVNMKSDAQREMGENIYNSLQEQGYEVLLDDRAERAGVKFADADLFGLPVRVTVGKKADEGIVEVKVRATGESEEVKVEELQTYIANILK</sequence>
<keyword id="KW-0030">Aminoacyl-tRNA synthetase</keyword>
<keyword id="KW-0067">ATP-binding</keyword>
<keyword id="KW-0963">Cytoplasm</keyword>
<keyword id="KW-0436">Ligase</keyword>
<keyword id="KW-0547">Nucleotide-binding</keyword>
<keyword id="KW-0648">Protein biosynthesis</keyword>
<evidence type="ECO:0000255" key="1">
    <source>
        <dbReference type="HAMAP-Rule" id="MF_01569"/>
    </source>
</evidence>
<feature type="chain" id="PRO_1000199355" description="Proline--tRNA ligase">
    <location>
        <begin position="1"/>
        <end position="566"/>
    </location>
</feature>
<gene>
    <name evidence="1" type="primary">proS</name>
    <name type="ordered locus">BcerKBAB4_3642</name>
</gene>